<sequence length="334" mass="37998">MENSEEESVGVAPQEFRELVLLESSLLEGEPSVQAPEQSPGAPAGDNQMVKPLVICGPVEDWVPLAEVLHHPDTCEEGDEATMAELKVTEVVDVKNEGEEVKDQKQEGEQDQQPELEKNPEQACDSKDQQGIQRLPLSGGGPAERRSKMEELELLQLELSFVNARCSGAFARIKAKVAKMRRPHFDRRKTIIQGIPGFWAKAMMNHPQMSSIISNQDEDLLSYMLSLEVEEYNPGLRMCRMMFFFSENPYFRNDIVTKDYQLSIIGYKESDSSTIEWIGQAEHGYANCMQDTTRLTFFNWLCAHKFPGSNRIAEIIMDDLWPNPLYYYPKEDHS</sequence>
<comment type="function">
    <text evidence="2">May be involved in sperm differentiation and proliferation.</text>
</comment>
<comment type="subcellular location">
    <subcellularLocation>
        <location evidence="2">Cytoplasm</location>
    </subcellularLocation>
    <subcellularLocation>
        <location evidence="2">Nucleus</location>
    </subcellularLocation>
    <text evidence="2">Predominantly cytoplasmic. Also found in nucleus.</text>
</comment>
<comment type="alternative products">
    <event type="alternative splicing"/>
    <isoform>
        <id>Q9R1M3-1</id>
        <name>1</name>
        <name>pLEE</name>
        <sequence type="displayed"/>
    </isoform>
    <isoform>
        <id>Q9R1M3-2</id>
        <name>2</name>
        <name>pSEE</name>
        <sequence type="described" ref="VSP_008014 VSP_008015"/>
    </isoform>
</comment>
<comment type="tissue specificity">
    <text evidence="4">Testis.</text>
</comment>
<comment type="PTM">
    <text evidence="1">Phosphorylated.</text>
</comment>
<comment type="similarity">
    <text evidence="6">Belongs to the nucleosome assembly protein (NAP) family.</text>
</comment>
<comment type="caution">
    <text evidence="6">Maps to duplicated regions on chromosome Y; the gene is present in at least 3 copies.</text>
</comment>
<accession>Q9R1M3</accession>
<accession>O70602</accession>
<accession>Q9R1M4</accession>
<protein>
    <recommendedName>
        <fullName>Testis-specific Y-encoded protein 1</fullName>
        <shortName>rTSPY</shortName>
    </recommendedName>
</protein>
<proteinExistence type="evidence at protein level"/>
<keyword id="KW-0025">Alternative splicing</keyword>
<keyword id="KW-0963">Cytoplasm</keyword>
<keyword id="KW-0217">Developmental protein</keyword>
<keyword id="KW-0221">Differentiation</keyword>
<keyword id="KW-0334">Gonadal differentiation</keyword>
<keyword id="KW-0539">Nucleus</keyword>
<keyword id="KW-0597">Phosphoprotein</keyword>
<keyword id="KW-1185">Reference proteome</keyword>
<keyword id="KW-0744">Spermatogenesis</keyword>
<evidence type="ECO:0000250" key="1"/>
<evidence type="ECO:0000250" key="2">
    <source>
        <dbReference type="UniProtKB" id="Q01534"/>
    </source>
</evidence>
<evidence type="ECO:0000256" key="3">
    <source>
        <dbReference type="SAM" id="MobiDB-lite"/>
    </source>
</evidence>
<evidence type="ECO:0000269" key="4">
    <source>
    </source>
</evidence>
<evidence type="ECO:0000303" key="5">
    <source>
    </source>
</evidence>
<evidence type="ECO:0000305" key="6"/>
<evidence type="ECO:0007744" key="7">
    <source>
    </source>
</evidence>
<name>TSPY1_RAT</name>
<gene>
    <name type="primary">Tspy1</name>
    <name type="synonym">Tspy</name>
</gene>
<dbReference type="EMBL" id="AF074880">
    <property type="protein sequence ID" value="AAD42924.1"/>
    <property type="molecule type" value="mRNA"/>
</dbReference>
<dbReference type="EMBL" id="AF074879">
    <property type="protein sequence ID" value="AAD42694.1"/>
    <property type="molecule type" value="Genomic_DNA"/>
</dbReference>
<dbReference type="EMBL" id="AJ001377">
    <property type="protein sequence ID" value="CAA04709.1"/>
    <property type="molecule type" value="mRNA"/>
</dbReference>
<dbReference type="EMBL" id="AJ001380">
    <property type="protein sequence ID" value="CAA04711.1"/>
    <property type="molecule type" value="Genomic_DNA"/>
</dbReference>
<dbReference type="RefSeq" id="NP_075212.2">
    <molecule id="Q9R1M3-1"/>
    <property type="nucleotide sequence ID" value="NM_022923.2"/>
</dbReference>
<dbReference type="RefSeq" id="XP_008771894.1">
    <molecule id="Q9R1M3-1"/>
    <property type="nucleotide sequence ID" value="XM_008773672.4"/>
</dbReference>
<dbReference type="RefSeq" id="XP_038956649.1">
    <molecule id="Q9R1M3-2"/>
    <property type="nucleotide sequence ID" value="XM_039100721.2"/>
</dbReference>
<dbReference type="SMR" id="Q9R1M3"/>
<dbReference type="BioGRID" id="247264">
    <property type="interactions" value="2"/>
</dbReference>
<dbReference type="FunCoup" id="Q9R1M3">
    <property type="interactions" value="60"/>
</dbReference>
<dbReference type="IntAct" id="Q9R1M3">
    <property type="interactions" value="1"/>
</dbReference>
<dbReference type="STRING" id="10116.ENSRNOP00000075045"/>
<dbReference type="iPTMnet" id="Q9R1M3"/>
<dbReference type="PhosphoSitePlus" id="Q9R1M3"/>
<dbReference type="Ensembl" id="ENSRNOT00000083382.3">
    <molecule id="Q9R1M3-1"/>
    <property type="protein sequence ID" value="ENSRNOP00000075045.1"/>
    <property type="gene ID" value="ENSRNOG00000054648.3"/>
</dbReference>
<dbReference type="Ensembl" id="ENSRNOT00000116666.1">
    <molecule id="Q9R1M3-2"/>
    <property type="protein sequence ID" value="ENSRNOP00000081959.1"/>
    <property type="gene ID" value="ENSRNOG00000054648.3"/>
</dbReference>
<dbReference type="GeneID" id="25223"/>
<dbReference type="KEGG" id="rno:25223"/>
<dbReference type="AGR" id="RGD:3912"/>
<dbReference type="CTD" id="7258"/>
<dbReference type="RGD" id="3912">
    <property type="gene designation" value="Tspy1"/>
</dbReference>
<dbReference type="GeneTree" id="ENSGT00940000162417"/>
<dbReference type="HOGENOM" id="CLU_051687_1_1_1"/>
<dbReference type="InParanoid" id="Q9R1M3"/>
<dbReference type="OMA" id="IMEYRAS"/>
<dbReference type="OrthoDB" id="9608677at2759"/>
<dbReference type="PhylomeDB" id="Q9R1M3"/>
<dbReference type="PRO" id="PR:Q9R1M3"/>
<dbReference type="Proteomes" id="UP000002494">
    <property type="component" value="Unplaced"/>
</dbReference>
<dbReference type="Bgee" id="ENSRNOG00000054648">
    <property type="expression patterns" value="Expressed in testis and 2 other cell types or tissues"/>
</dbReference>
<dbReference type="GO" id="GO:0000785">
    <property type="term" value="C:chromatin"/>
    <property type="evidence" value="ECO:0000318"/>
    <property type="project" value="GO_Central"/>
</dbReference>
<dbReference type="GO" id="GO:0005737">
    <property type="term" value="C:cytoplasm"/>
    <property type="evidence" value="ECO:0007669"/>
    <property type="project" value="UniProtKB-SubCell"/>
</dbReference>
<dbReference type="GO" id="GO:0005634">
    <property type="term" value="C:nucleus"/>
    <property type="evidence" value="ECO:0000318"/>
    <property type="project" value="GO_Central"/>
</dbReference>
<dbReference type="GO" id="GO:0003682">
    <property type="term" value="F:chromatin binding"/>
    <property type="evidence" value="ECO:0000318"/>
    <property type="project" value="GO_Central"/>
</dbReference>
<dbReference type="GO" id="GO:0042393">
    <property type="term" value="F:histone binding"/>
    <property type="evidence" value="ECO:0000314"/>
    <property type="project" value="RGD"/>
</dbReference>
<dbReference type="GO" id="GO:0030154">
    <property type="term" value="P:cell differentiation"/>
    <property type="evidence" value="ECO:0007669"/>
    <property type="project" value="UniProtKB-KW"/>
</dbReference>
<dbReference type="GO" id="GO:0007506">
    <property type="term" value="P:gonadal mesoderm development"/>
    <property type="evidence" value="ECO:0007669"/>
    <property type="project" value="UniProtKB-KW"/>
</dbReference>
<dbReference type="GO" id="GO:0006334">
    <property type="term" value="P:nucleosome assembly"/>
    <property type="evidence" value="ECO:0007669"/>
    <property type="project" value="InterPro"/>
</dbReference>
<dbReference type="GO" id="GO:0007283">
    <property type="term" value="P:spermatogenesis"/>
    <property type="evidence" value="ECO:0000270"/>
    <property type="project" value="RGD"/>
</dbReference>
<dbReference type="FunFam" id="3.30.1120.90:FF:000002">
    <property type="entry name" value="Testis-specific Y-encoded-like protein 2"/>
    <property type="match status" value="1"/>
</dbReference>
<dbReference type="Gene3D" id="1.20.5.1500">
    <property type="match status" value="1"/>
</dbReference>
<dbReference type="Gene3D" id="3.30.1120.90">
    <property type="entry name" value="Nucleosome assembly protein"/>
    <property type="match status" value="1"/>
</dbReference>
<dbReference type="InterPro" id="IPR037231">
    <property type="entry name" value="NAP-like_sf"/>
</dbReference>
<dbReference type="InterPro" id="IPR002164">
    <property type="entry name" value="NAP_family"/>
</dbReference>
<dbReference type="PANTHER" id="PTHR11875">
    <property type="entry name" value="TESTIS-SPECIFIC Y-ENCODED PROTEIN"/>
    <property type="match status" value="1"/>
</dbReference>
<dbReference type="Pfam" id="PF00956">
    <property type="entry name" value="NAP"/>
    <property type="match status" value="1"/>
</dbReference>
<dbReference type="SUPFAM" id="SSF143113">
    <property type="entry name" value="NAP-like"/>
    <property type="match status" value="1"/>
</dbReference>
<reference key="1">
    <citation type="journal article" date="1998" name="Cytogenet. Cell Genet.">
        <title>Organization and expression of rat Tspy.</title>
        <authorList>
            <person name="Dechend F."/>
            <person name="Schubert S."/>
            <person name="Nanda I."/>
            <person name="Vogel T."/>
            <person name="Schmid M."/>
            <person name="Schmidtke J."/>
        </authorList>
    </citation>
    <scope>NUCLEOTIDE SEQUENCE [GENOMIC DNA / MRNA] (ISOFORMS 1 AND 2)</scope>
    <source>
        <strain>Sprague-Dawley</strain>
        <tissue>Testis</tissue>
    </source>
</reference>
<reference key="2">
    <citation type="journal article" date="1998" name="Hum. Mol. Genet.">
        <title>Rodent Y chromosome TSPY gene is functional in rat and non-functional in mouse.</title>
        <authorList>
            <person name="Mazeyrat S."/>
            <person name="Mitchell M.J."/>
        </authorList>
    </citation>
    <scope>NUCLEOTIDE SEQUENCE [GENOMIC DNA / MRNA] OF 163-334 (ISOFORM 1)</scope>
    <scope>TISSUE SPECIFICITY</scope>
    <source>
        <strain>Wistar</strain>
        <tissue>Testis</tissue>
    </source>
</reference>
<reference key="3">
    <citation type="journal article" date="2012" name="Nat. Commun.">
        <title>Quantitative maps of protein phosphorylation sites across 14 different rat organs and tissues.</title>
        <authorList>
            <person name="Lundby A."/>
            <person name="Secher A."/>
            <person name="Lage K."/>
            <person name="Nordsborg N.B."/>
            <person name="Dmytriyev A."/>
            <person name="Lundby C."/>
            <person name="Olsen J.V."/>
        </authorList>
    </citation>
    <scope>PHOSPHORYLATION [LARGE SCALE ANALYSIS] AT SER-4</scope>
    <scope>IDENTIFICATION BY MASS SPECTROMETRY [LARGE SCALE ANALYSIS]</scope>
</reference>
<organism>
    <name type="scientific">Rattus norvegicus</name>
    <name type="common">Rat</name>
    <dbReference type="NCBI Taxonomy" id="10116"/>
    <lineage>
        <taxon>Eukaryota</taxon>
        <taxon>Metazoa</taxon>
        <taxon>Chordata</taxon>
        <taxon>Craniata</taxon>
        <taxon>Vertebrata</taxon>
        <taxon>Euteleostomi</taxon>
        <taxon>Mammalia</taxon>
        <taxon>Eutheria</taxon>
        <taxon>Euarchontoglires</taxon>
        <taxon>Glires</taxon>
        <taxon>Rodentia</taxon>
        <taxon>Myomorpha</taxon>
        <taxon>Muroidea</taxon>
        <taxon>Muridae</taxon>
        <taxon>Murinae</taxon>
        <taxon>Rattus</taxon>
    </lineage>
</organism>
<feature type="chain" id="PRO_0000185669" description="Testis-specific Y-encoded protein 1">
    <location>
        <begin position="1"/>
        <end position="334"/>
    </location>
</feature>
<feature type="region of interest" description="Disordered" evidence="3">
    <location>
        <begin position="27"/>
        <end position="46"/>
    </location>
</feature>
<feature type="region of interest" description="Disordered" evidence="3">
    <location>
        <begin position="96"/>
        <end position="146"/>
    </location>
</feature>
<feature type="compositionally biased region" description="Basic and acidic residues" evidence="3">
    <location>
        <begin position="96"/>
        <end position="108"/>
    </location>
</feature>
<feature type="compositionally biased region" description="Basic and acidic residues" evidence="3">
    <location>
        <begin position="115"/>
        <end position="128"/>
    </location>
</feature>
<feature type="modified residue" description="Phosphoserine" evidence="7">
    <location>
        <position position="4"/>
    </location>
</feature>
<feature type="splice variant" id="VSP_008014" description="In isoform 2." evidence="5">
    <location>
        <begin position="1"/>
        <end position="148"/>
    </location>
</feature>
<feature type="splice variant" id="VSP_008015" description="In isoform 2." evidence="5">
    <original>MEELELLQLELSFVNARCSGAFARIKAKVAKMRRPHFDRRKTIIQGIPGFWAKA</original>
    <variation>MGYLQKHHFTESRLFVHPFVSSTFNSIAQFLDQRQ</variation>
    <location>
        <begin position="149"/>
        <end position="202"/>
    </location>
</feature>